<organism>
    <name type="scientific">Capsicum annuum</name>
    <name type="common">Capsicum pepper</name>
    <dbReference type="NCBI Taxonomy" id="4072"/>
    <lineage>
        <taxon>Eukaryota</taxon>
        <taxon>Viridiplantae</taxon>
        <taxon>Streptophyta</taxon>
        <taxon>Embryophyta</taxon>
        <taxon>Tracheophyta</taxon>
        <taxon>Spermatophyta</taxon>
        <taxon>Magnoliopsida</taxon>
        <taxon>eudicotyledons</taxon>
        <taxon>Gunneridae</taxon>
        <taxon>Pentapetalae</taxon>
        <taxon>asterids</taxon>
        <taxon>lamiids</taxon>
        <taxon>Solanales</taxon>
        <taxon>Solanaceae</taxon>
        <taxon>Solanoideae</taxon>
        <taxon>Capsiceae</taxon>
        <taxon>Capsicum</taxon>
    </lineage>
</organism>
<keyword id="KW-0067">ATP-binding</keyword>
<keyword id="KW-0418">Kinase</keyword>
<keyword id="KW-0547">Nucleotide-binding</keyword>
<keyword id="KW-0597">Phosphoprotein</keyword>
<keyword id="KW-1185">Reference proteome</keyword>
<keyword id="KW-0723">Serine/threonine-protein kinase</keyword>
<keyword id="KW-0346">Stress response</keyword>
<keyword id="KW-0808">Transferase</keyword>
<protein>
    <recommendedName>
        <fullName evidence="5">Mitogen-activated protein kinase 1</fullName>
        <ecNumber evidence="2">2.7.11.24</ecNumber>
    </recommendedName>
    <alternativeName>
        <fullName evidence="6">Mitogen-activated protein kinase 3</fullName>
        <shortName evidence="6">CaMPK3</shortName>
    </alternativeName>
</protein>
<comment type="function">
    <text evidence="2">Stress-inducible protein kinase involved in oxidative stress-mediated and innate immune MAP kinase signaling cascades.</text>
</comment>
<comment type="catalytic activity">
    <reaction evidence="2">
        <text>L-seryl-[protein] + ATP = O-phospho-L-seryl-[protein] + ADP + H(+)</text>
        <dbReference type="Rhea" id="RHEA:17989"/>
        <dbReference type="Rhea" id="RHEA-COMP:9863"/>
        <dbReference type="Rhea" id="RHEA-COMP:11604"/>
        <dbReference type="ChEBI" id="CHEBI:15378"/>
        <dbReference type="ChEBI" id="CHEBI:29999"/>
        <dbReference type="ChEBI" id="CHEBI:30616"/>
        <dbReference type="ChEBI" id="CHEBI:83421"/>
        <dbReference type="ChEBI" id="CHEBI:456216"/>
        <dbReference type="EC" id="2.7.11.24"/>
    </reaction>
</comment>
<comment type="catalytic activity">
    <reaction evidence="2">
        <text>L-threonyl-[protein] + ATP = O-phospho-L-threonyl-[protein] + ADP + H(+)</text>
        <dbReference type="Rhea" id="RHEA:46608"/>
        <dbReference type="Rhea" id="RHEA-COMP:11060"/>
        <dbReference type="Rhea" id="RHEA-COMP:11605"/>
        <dbReference type="ChEBI" id="CHEBI:15378"/>
        <dbReference type="ChEBI" id="CHEBI:30013"/>
        <dbReference type="ChEBI" id="CHEBI:30616"/>
        <dbReference type="ChEBI" id="CHEBI:61977"/>
        <dbReference type="ChEBI" id="CHEBI:456216"/>
        <dbReference type="EC" id="2.7.11.24"/>
    </reaction>
</comment>
<comment type="cofactor">
    <cofactor evidence="1">
        <name>Mg(2+)</name>
        <dbReference type="ChEBI" id="CHEBI:18420"/>
    </cofactor>
</comment>
<comment type="activity regulation">
    <text evidence="2">Activated by threonine and tyrosine phosphorylation.</text>
</comment>
<comment type="induction">
    <text evidence="4">Induced by wounding in a cultivar-dependent manner, in cv. Pungchon but not in cv. Subicho; this induction is reduced upon UV-C treatment (at protein level).</text>
</comment>
<comment type="domain">
    <text evidence="2">The TXY motif contains the threonine and tyrosine residues whose phosphorylation activates the MAP kinases.</text>
</comment>
<comment type="PTM">
    <text evidence="4">Activated by wounding and UV-C in a cultivar-dependent manner; phosphorylated in cv. Pungchon but not in cv. Subicho.</text>
</comment>
<comment type="similarity">
    <text evidence="7">Belongs to the protein kinase superfamily. CMGC Ser/Thr protein kinase family. MAP kinase subfamily.</text>
</comment>
<reference key="1">
    <citation type="journal article" date="2001" name="Mol. Cells">
        <title>Molecular cloning and cultivar specific expression of MAP kinases from Capsicum annuum.</title>
        <authorList>
            <person name="Shin H.J."/>
            <person name="Lee D.E."/>
            <person name="Shin D.H."/>
            <person name="Kim K.U."/>
            <person name="Kim H.Y."/>
            <person name="Ohashi Y."/>
            <person name="Han O."/>
            <person name="Baik M.G."/>
            <person name="Back K."/>
        </authorList>
    </citation>
    <scope>NUCLEOTIDE SEQUENCE [GENOMIC DNA]</scope>
    <scope>INDUCTION BY WOUNDING AND UV-C</scope>
    <scope>PHOSPHORYLATION AT THR-201; TYR-203 AND THR-206</scope>
    <source>
        <strain>cv. Pungchon</strain>
        <strain>cv. Subicho</strain>
    </source>
</reference>
<reference key="2">
    <citation type="submission" date="2017-11" db="EMBL/GenBank/DDBJ databases">
        <title>Identification and Analysis of MPK and MKK in pepper and tomato.</title>
        <authorList>
            <person name="Iftikhar H."/>
            <person name="Hanzawa Y."/>
            <person name="Virk N."/>
        </authorList>
    </citation>
    <scope>NUCLEOTIDE SEQUENCE [MRNA]</scope>
</reference>
<reference key="3">
    <citation type="journal article" date="2017" name="Genome Biol.">
        <title>New reference genome sequences of hot pepper reveal the massive evolution of plant disease-resistance genes by retroduplication.</title>
        <authorList>
            <person name="Kim S."/>
            <person name="Park J."/>
            <person name="Yeom S.I."/>
            <person name="Kim Y.M."/>
            <person name="Seo E."/>
            <person name="Kim K.T."/>
            <person name="Kim M.S."/>
            <person name="Lee J.M."/>
            <person name="Cheong K."/>
            <person name="Shin H.S."/>
            <person name="Kim S.B."/>
            <person name="Han K."/>
            <person name="Lee J."/>
            <person name="Park M."/>
            <person name="Lee H.A."/>
            <person name="Lee H.Y."/>
            <person name="Lee Y."/>
            <person name="Oh S."/>
            <person name="Lee J.H."/>
            <person name="Choi E."/>
            <person name="Choi E."/>
            <person name="Lee S.E."/>
            <person name="Jeon J."/>
            <person name="Kim H."/>
            <person name="Choi G."/>
            <person name="Song H."/>
            <person name="Lee J."/>
            <person name="Lee S.C."/>
            <person name="Kwon J.K."/>
            <person name="Lee H.Y."/>
            <person name="Koo N."/>
            <person name="Hong Y."/>
            <person name="Kim R.W."/>
            <person name="Kang W.H."/>
            <person name="Huh J.H."/>
            <person name="Kang B.C."/>
            <person name="Yang T.J."/>
            <person name="Lee Y.H."/>
            <person name="Bennetzen J.L."/>
            <person name="Choi D."/>
        </authorList>
    </citation>
    <scope>NUCLEOTIDE SEQUENCE [LARGE SCALE GENOMIC DNA]</scope>
    <source>
        <strain>cv. CM334</strain>
    </source>
</reference>
<name>MK1_CAPAN</name>
<accession>Q9LKZ2</accession>
<accession>A0A1U8H3W9</accession>
<accession>A0A2G2Z982</accession>
<gene>
    <name evidence="5" type="primary">MK1</name>
    <name evidence="6" type="synonym">MAPK3</name>
    <name evidence="6" type="synonym">MPK3</name>
    <name evidence="8" type="ORF">T459_16602</name>
</gene>
<sequence length="375" mass="42954">MVDANMGAAGGQFPEFPNIVTHGGQYVQYDIFGNFFEITTKYRPPIMPIGRGAYGIVCSVFNAELNEMVAVKKIANAFDNYMDAKRTLREIKLLRHLDHENVIGLRDVIPPPLRREFSDVYIATELMDTDLHQIIRSNQGLSEDHCQYFMYQLLRGLKYIHSANVIHRDLKPSNLLLNANCDLKICDFGLARPNLENENMTEYVVTRWYRAPELLLNSSDYTEAIDVWSVGCIFMELMNRKPLFAGKDHVHQIRLLTELLGTPTESDLSFLRNEDAKRYIRQLPQHPRQQLAKVFPHVNSLAIELVDKMLTLNPTGRITVEEALAHPYLAKLHDAADEPVCPVPFSFDFEQQGIGEEQIKDMIYQEALVLNPEYA</sequence>
<dbReference type="EC" id="2.7.11.24" evidence="2"/>
<dbReference type="EMBL" id="AF247135">
    <property type="protein sequence ID" value="AAF81419.1"/>
    <property type="molecule type" value="Genomic_DNA"/>
</dbReference>
<dbReference type="EMBL" id="MG407600">
    <property type="protein sequence ID" value="AXP12320.1"/>
    <property type="molecule type" value="mRNA"/>
</dbReference>
<dbReference type="EMBL" id="AYRZ02000006">
    <property type="protein sequence ID" value="PHT78550.1"/>
    <property type="molecule type" value="Genomic_DNA"/>
</dbReference>
<dbReference type="SMR" id="Q9LKZ2"/>
<dbReference type="GeneID" id="107873437"/>
<dbReference type="KEGG" id="cann:107873437"/>
<dbReference type="OrthoDB" id="192887at2759"/>
<dbReference type="Proteomes" id="UP000222542">
    <property type="component" value="Chromosome 6"/>
</dbReference>
<dbReference type="GO" id="GO:0005524">
    <property type="term" value="F:ATP binding"/>
    <property type="evidence" value="ECO:0007669"/>
    <property type="project" value="UniProtKB-KW"/>
</dbReference>
<dbReference type="GO" id="GO:0004707">
    <property type="term" value="F:MAP kinase activity"/>
    <property type="evidence" value="ECO:0007669"/>
    <property type="project" value="UniProtKB-EC"/>
</dbReference>
<dbReference type="GO" id="GO:0010225">
    <property type="term" value="P:response to UV-C"/>
    <property type="evidence" value="ECO:0000314"/>
    <property type="project" value="UniProtKB"/>
</dbReference>
<dbReference type="GO" id="GO:0009611">
    <property type="term" value="P:response to wounding"/>
    <property type="evidence" value="ECO:0000314"/>
    <property type="project" value="UniProtKB"/>
</dbReference>
<dbReference type="FunFam" id="1.10.510.10:FF:000013">
    <property type="entry name" value="Mitogen-activated protein kinase"/>
    <property type="match status" value="1"/>
</dbReference>
<dbReference type="FunFam" id="3.30.200.20:FF:000046">
    <property type="entry name" value="Mitogen-activated protein kinase"/>
    <property type="match status" value="1"/>
</dbReference>
<dbReference type="Gene3D" id="3.30.200.20">
    <property type="entry name" value="Phosphorylase Kinase, domain 1"/>
    <property type="match status" value="1"/>
</dbReference>
<dbReference type="Gene3D" id="1.10.510.10">
    <property type="entry name" value="Transferase(Phosphotransferase) domain 1"/>
    <property type="match status" value="1"/>
</dbReference>
<dbReference type="InterPro" id="IPR011009">
    <property type="entry name" value="Kinase-like_dom_sf"/>
</dbReference>
<dbReference type="InterPro" id="IPR050117">
    <property type="entry name" value="MAP_kinase"/>
</dbReference>
<dbReference type="InterPro" id="IPR003527">
    <property type="entry name" value="MAP_kinase_CS"/>
</dbReference>
<dbReference type="InterPro" id="IPR000719">
    <property type="entry name" value="Prot_kinase_dom"/>
</dbReference>
<dbReference type="InterPro" id="IPR017441">
    <property type="entry name" value="Protein_kinase_ATP_BS"/>
</dbReference>
<dbReference type="InterPro" id="IPR008271">
    <property type="entry name" value="Ser/Thr_kinase_AS"/>
</dbReference>
<dbReference type="PANTHER" id="PTHR24055">
    <property type="entry name" value="MITOGEN-ACTIVATED PROTEIN KINASE"/>
    <property type="match status" value="1"/>
</dbReference>
<dbReference type="Pfam" id="PF00069">
    <property type="entry name" value="Pkinase"/>
    <property type="match status" value="1"/>
</dbReference>
<dbReference type="SMART" id="SM00220">
    <property type="entry name" value="S_TKc"/>
    <property type="match status" value="1"/>
</dbReference>
<dbReference type="SUPFAM" id="SSF56112">
    <property type="entry name" value="Protein kinase-like (PK-like)"/>
    <property type="match status" value="1"/>
</dbReference>
<dbReference type="PROSITE" id="PS01351">
    <property type="entry name" value="MAPK"/>
    <property type="match status" value="1"/>
</dbReference>
<dbReference type="PROSITE" id="PS00107">
    <property type="entry name" value="PROTEIN_KINASE_ATP"/>
    <property type="match status" value="1"/>
</dbReference>
<dbReference type="PROSITE" id="PS50011">
    <property type="entry name" value="PROTEIN_KINASE_DOM"/>
    <property type="match status" value="1"/>
</dbReference>
<dbReference type="PROSITE" id="PS00108">
    <property type="entry name" value="PROTEIN_KINASE_ST"/>
    <property type="match status" value="1"/>
</dbReference>
<proteinExistence type="evidence at protein level"/>
<evidence type="ECO:0000250" key="1">
    <source>
        <dbReference type="UniProtKB" id="Q16539"/>
    </source>
</evidence>
<evidence type="ECO:0000250" key="2">
    <source>
        <dbReference type="UniProtKB" id="Q39023"/>
    </source>
</evidence>
<evidence type="ECO:0000255" key="3">
    <source>
        <dbReference type="PROSITE-ProRule" id="PRU00159"/>
    </source>
</evidence>
<evidence type="ECO:0000269" key="4">
    <source>
    </source>
</evidence>
<evidence type="ECO:0000303" key="5">
    <source>
    </source>
</evidence>
<evidence type="ECO:0000303" key="6">
    <source ref="2"/>
</evidence>
<evidence type="ECO:0000305" key="7"/>
<evidence type="ECO:0000312" key="8">
    <source>
        <dbReference type="EMBL" id="PHT78550.1"/>
    </source>
</evidence>
<feature type="chain" id="PRO_0000460177" description="Mitogen-activated protein kinase 1">
    <location>
        <begin position="1"/>
        <end position="375"/>
    </location>
</feature>
<feature type="domain" description="Protein kinase" evidence="3">
    <location>
        <begin position="43"/>
        <end position="329"/>
    </location>
</feature>
<feature type="short sequence motif" description="TXY" evidence="2">
    <location>
        <begin position="201"/>
        <end position="203"/>
    </location>
</feature>
<feature type="active site" description="Proton acceptor" evidence="3">
    <location>
        <position position="169"/>
    </location>
</feature>
<feature type="binding site" evidence="3">
    <location>
        <begin position="49"/>
        <end position="57"/>
    </location>
    <ligand>
        <name>ATP</name>
        <dbReference type="ChEBI" id="CHEBI:30616"/>
    </ligand>
</feature>
<feature type="binding site" evidence="3">
    <location>
        <position position="72"/>
    </location>
    <ligand>
        <name>ATP</name>
        <dbReference type="ChEBI" id="CHEBI:30616"/>
    </ligand>
</feature>
<feature type="modified residue" description="Phosphothreonine" evidence="4">
    <location>
        <position position="201"/>
    </location>
</feature>
<feature type="modified residue" description="Phosphotyrosine" evidence="4">
    <location>
        <position position="203"/>
    </location>
</feature>
<feature type="modified residue" description="Phosphothreonine" evidence="4">
    <location>
        <position position="206"/>
    </location>
</feature>
<feature type="sequence conflict" description="In Ref. 3; PHT78550." evidence="7" ref="3">
    <original>V</original>
    <variation>A</variation>
    <location>
        <position position="369"/>
    </location>
</feature>